<reference key="1">
    <citation type="journal article" date="1996" name="Biochem. Biophys. Res. Commun.">
        <title>Application of mRNA differential display to liver cirrhosis: reduced fetuin expression in biliary cirrhosis in the rat.</title>
        <authorList>
            <person name="Forestier M."/>
            <person name="Reichen J."/>
            <person name="Solioz M."/>
        </authorList>
    </citation>
    <scope>NUCLEOTIDE SEQUENCE [MRNA]</scope>
    <source>
        <strain>Sprague-Dawley</strain>
        <tissue>Liver</tissue>
    </source>
</reference>
<reference key="2">
    <citation type="journal article" date="1999" name="Biochem. J.">
        <title>Apolipoprotein B mRNA and lipoprotein secretion are increased in McArdle RH-7777 cells by expression of betaine-homocysteine S-methyltransferase.</title>
        <authorList>
            <person name="Sowden M.P."/>
            <person name="Collins H.L."/>
            <person name="Smith H.C."/>
            <person name="Garrow T.A."/>
            <person name="Sparks J.D."/>
            <person name="Sparks C.E."/>
        </authorList>
    </citation>
    <scope>NUCLEOTIDE SEQUENCE [MRNA]</scope>
</reference>
<reference key="3">
    <citation type="journal article" date="2004" name="Genome Res.">
        <title>The status, quality, and expansion of the NIH full-length cDNA project: the Mammalian Gene Collection (MGC).</title>
        <authorList>
            <consortium name="The MGC Project Team"/>
        </authorList>
    </citation>
    <scope>NUCLEOTIDE SEQUENCE [LARGE SCALE MRNA]</scope>
    <source>
        <tissue>Kidney</tissue>
    </source>
</reference>
<reference key="4">
    <citation type="journal article" date="2003" name="Biochem. J.">
        <title>Active-site-mutagenesis study of rat liver betaine-homocysteine S-methyltransferase.</title>
        <authorList>
            <person name="Gonzalez B."/>
            <person name="Campillo N."/>
            <person name="Garrido F."/>
            <person name="Gasset M."/>
            <person name="Sanz-Aparicio J."/>
            <person name="Pajares M.A."/>
        </authorList>
    </citation>
    <scope>FUNCTION</scope>
    <scope>CATALYTIC ACTIVITY</scope>
    <scope>PATHWAY</scope>
    <scope>BIOPHYSICOCHEMICAL PROPERTIES</scope>
    <scope>SUBCELLULAR LOCATION</scope>
    <scope>MUTAGENESIS OF GLU-21; ASP-26; THR-73; PHE-74; TYR-77; ALA-119; GLU-159; THR-184 AND CYS-186</scope>
</reference>
<reference key="5">
    <citation type="journal article" date="2012" name="Nat. Commun.">
        <title>Quantitative maps of protein phosphorylation sites across 14 different rat organs and tissues.</title>
        <authorList>
            <person name="Lundby A."/>
            <person name="Secher A."/>
            <person name="Lage K."/>
            <person name="Nordsborg N.B."/>
            <person name="Dmytriyev A."/>
            <person name="Lundby C."/>
            <person name="Olsen J.V."/>
        </authorList>
    </citation>
    <scope>PHOSPHORYLATION [LARGE SCALE ANALYSIS] AT SER-330</scope>
    <scope>IDENTIFICATION BY MASS SPECTROMETRY [LARGE SCALE ANALYSIS]</scope>
</reference>
<reference key="6">
    <citation type="journal article" date="2017" name="Biochim. Biophys. Acta">
        <title>Betaine homocysteine S-methyltransferase emerges as a new player of the nuclear methionine cycle.</title>
        <authorList>
            <person name="Perez-Miguelsanz J."/>
            <person name="Vallecillo N."/>
            <person name="Garrido F."/>
            <person name="Reytor E."/>
            <person name="Perez-Sala D."/>
            <person name="Pajares M.A."/>
        </authorList>
    </citation>
    <scope>FUNCTION</scope>
    <scope>CATALYTIC ACTIVITY</scope>
    <scope>SUBCELLULAR LOCATION</scope>
    <scope>SUBUNIT</scope>
    <scope>TISSUE SPECIFICITY</scope>
    <scope>MUTAGENESIS OF LYS-7; LYS-8; LYS-10 AND ARG-11</scope>
</reference>
<reference key="7">
    <citation type="journal article" date="2004" name="J. Mol. Biol.">
        <title>Crystal structure of rat liver betaine homocysteine S-methyltransferase reveals new oligomerization features and conformational changes upon substrate binding.</title>
        <authorList>
            <person name="Gonzalez B."/>
            <person name="Pajares M.A."/>
            <person name="Martinez-Ripoll M."/>
            <person name="Blundell T.L."/>
            <person name="Sanz-Aparicio J."/>
        </authorList>
    </citation>
    <scope>X-RAY CRYSTALLOGRAPHY (2.5 ANGSTROMS)</scope>
    <scope>SUBUNIT</scope>
</reference>
<gene>
    <name evidence="7" type="primary">Bhmt</name>
</gene>
<organism>
    <name type="scientific">Rattus norvegicus</name>
    <name type="common">Rat</name>
    <dbReference type="NCBI Taxonomy" id="10116"/>
    <lineage>
        <taxon>Eukaryota</taxon>
        <taxon>Metazoa</taxon>
        <taxon>Chordata</taxon>
        <taxon>Craniata</taxon>
        <taxon>Vertebrata</taxon>
        <taxon>Euteleostomi</taxon>
        <taxon>Mammalia</taxon>
        <taxon>Eutheria</taxon>
        <taxon>Euarchontoglires</taxon>
        <taxon>Glires</taxon>
        <taxon>Rodentia</taxon>
        <taxon>Myomorpha</taxon>
        <taxon>Muroidea</taxon>
        <taxon>Muridae</taxon>
        <taxon>Murinae</taxon>
        <taxon>Rattus</taxon>
    </lineage>
</organism>
<proteinExistence type="evidence at protein level"/>
<feature type="chain" id="PRO_0000114624" description="Betaine--homocysteine S-methyltransferase 1">
    <location>
        <begin position="1"/>
        <end position="407"/>
    </location>
</feature>
<feature type="domain" description="Hcy-binding" evidence="3">
    <location>
        <begin position="11"/>
        <end position="314"/>
    </location>
</feature>
<feature type="binding site" evidence="2 3">
    <location>
        <position position="217"/>
    </location>
    <ligand>
        <name>Zn(2+)</name>
        <dbReference type="ChEBI" id="CHEBI:29105"/>
    </ligand>
</feature>
<feature type="binding site" evidence="2 3">
    <location>
        <position position="299"/>
    </location>
    <ligand>
        <name>Zn(2+)</name>
        <dbReference type="ChEBI" id="CHEBI:29105"/>
    </ligand>
</feature>
<feature type="binding site" evidence="2 3">
    <location>
        <position position="300"/>
    </location>
    <ligand>
        <name>Zn(2+)</name>
        <dbReference type="ChEBI" id="CHEBI:29105"/>
    </ligand>
</feature>
<feature type="modified residue" description="N6-succinyllysine" evidence="1">
    <location>
        <position position="40"/>
    </location>
</feature>
<feature type="modified residue" description="N6-succinyllysine" evidence="1">
    <location>
        <position position="93"/>
    </location>
</feature>
<feature type="modified residue" description="N6-succinyllysine" evidence="1">
    <location>
        <position position="98"/>
    </location>
</feature>
<feature type="modified residue" description="N6-succinyllysine" evidence="1">
    <location>
        <position position="232"/>
    </location>
</feature>
<feature type="modified residue" description="N6-succinyllysine" evidence="1">
    <location>
        <position position="241"/>
    </location>
</feature>
<feature type="modified residue" description="Phosphoserine" evidence="11">
    <location>
        <position position="330"/>
    </location>
</feature>
<feature type="modified residue" description="N6-succinyllysine" evidence="1">
    <location>
        <position position="340"/>
    </location>
</feature>
<feature type="modified residue" description="N6-succinyllysine" evidence="1">
    <location>
        <position position="377"/>
    </location>
</feature>
<feature type="mutagenesis site" description="Has no effect on tetramer assembly or catalytic efficiency." evidence="6">
    <original>K</original>
    <variation>A</variation>
    <location>
        <position position="7"/>
    </location>
</feature>
<feature type="mutagenesis site" description="Has no effect on tetramer assembly. Decreases the catalytic efficiency." evidence="6">
    <original>K</original>
    <variation>A</variation>
    <location>
        <position position="8"/>
    </location>
</feature>
<feature type="mutagenesis site" description="Has no effect on tetramer assembly. Decreases the catalytic efficiency. Alters nucleocytoplasmic distribution." evidence="6">
    <original>K</original>
    <variation>A</variation>
    <location>
        <position position="10"/>
    </location>
</feature>
<feature type="mutagenesis site" description="Has no effect on tetramer assembly." evidence="6">
    <original>R</original>
    <variation>A</variation>
    <location>
        <position position="11"/>
    </location>
</feature>
<feature type="mutagenesis site" description="Decreases the catalytic efficiency. Increases the affinity for L-homocysteine." evidence="4">
    <original>E</original>
    <variation>A</variation>
    <variation>K</variation>
    <location>
        <position position="21"/>
    </location>
</feature>
<feature type="mutagenesis site" description="Decreases the catalytic efficiency. Decreases the affinity for glycine betaine." evidence="4">
    <original>D</original>
    <variation>A</variation>
    <variation>I</variation>
    <location>
        <position position="26"/>
    </location>
</feature>
<feature type="mutagenesis site" description="Decreases the catalytic efficiency." evidence="4">
    <original>T</original>
    <variation>G</variation>
    <location>
        <position position="73"/>
    </location>
</feature>
<feature type="mutagenesis site" description="Decreases the catalytic efficiency. Decreases the affinity for glycine betaine." evidence="4">
    <original>F</original>
    <variation>A</variation>
    <location>
        <position position="74"/>
    </location>
</feature>
<feature type="mutagenesis site" description="Decreases the catalytic efficiency." evidence="4">
    <original>Y</original>
    <variation>A</variation>
    <location>
        <position position="77"/>
    </location>
</feature>
<feature type="mutagenesis site" description="Decreases the catalytic efficiency." evidence="4">
    <original>A</original>
    <variation>G</variation>
    <location>
        <position position="119"/>
    </location>
</feature>
<feature type="mutagenesis site" description="Loss of catalytic activity." evidence="4">
    <original>E</original>
    <variation>G</variation>
    <variation>K</variation>
    <location>
        <position position="159"/>
    </location>
</feature>
<feature type="mutagenesis site" description="Decreases the catalytic efficiency." evidence="4">
    <original>T</original>
    <variation>G</variation>
    <location>
        <position position="184"/>
    </location>
</feature>
<feature type="mutagenesis site" description="Decreases the catalytic efficiency. Increases the affinity for L-homocysteine." evidence="4">
    <original>C</original>
    <variation>A</variation>
    <variation>S</variation>
    <location>
        <position position="186"/>
    </location>
</feature>
<feature type="sequence conflict" description="In Ref. 3; AAH78811." evidence="8" ref="3">
    <original>HA</original>
    <variation>QP</variation>
    <location>
        <begin position="247"/>
        <end position="248"/>
    </location>
</feature>
<feature type="helix" evidence="12">
    <location>
        <begin position="13"/>
        <end position="18"/>
    </location>
</feature>
<feature type="helix" evidence="12">
    <location>
        <begin position="29"/>
        <end position="35"/>
    </location>
</feature>
<feature type="turn" evidence="12">
    <location>
        <begin position="41"/>
        <end position="43"/>
    </location>
</feature>
<feature type="helix" evidence="12">
    <location>
        <begin position="48"/>
        <end position="51"/>
    </location>
</feature>
<feature type="helix" evidence="12">
    <location>
        <begin position="53"/>
        <end position="66"/>
    </location>
</feature>
<feature type="strand" evidence="12">
    <location>
        <begin position="70"/>
        <end position="72"/>
    </location>
</feature>
<feature type="helix" evidence="12">
    <location>
        <begin position="96"/>
        <end position="112"/>
    </location>
</feature>
<feature type="turn" evidence="12">
    <location>
        <begin position="113"/>
        <end position="115"/>
    </location>
</feature>
<feature type="strand" evidence="12">
    <location>
        <begin position="117"/>
        <end position="122"/>
    </location>
</feature>
<feature type="helix" evidence="12">
    <location>
        <begin position="126"/>
        <end position="129"/>
    </location>
</feature>
<feature type="helix" evidence="12">
    <location>
        <begin position="134"/>
        <end position="150"/>
    </location>
</feature>
<feature type="strand" evidence="12">
    <location>
        <begin position="154"/>
        <end position="158"/>
    </location>
</feature>
<feature type="helix" evidence="12">
    <location>
        <begin position="164"/>
        <end position="175"/>
    </location>
</feature>
<feature type="strand" evidence="12">
    <location>
        <begin position="181"/>
        <end position="185"/>
    </location>
</feature>
<feature type="helix" evidence="12">
    <location>
        <begin position="198"/>
        <end position="207"/>
    </location>
</feature>
<feature type="strand" evidence="12">
    <location>
        <begin position="211"/>
        <end position="219"/>
    </location>
</feature>
<feature type="helix" evidence="12">
    <location>
        <begin position="221"/>
        <end position="236"/>
    </location>
</feature>
<feature type="turn" evidence="12">
    <location>
        <begin position="237"/>
        <end position="239"/>
    </location>
</feature>
<feature type="strand" evidence="12">
    <location>
        <begin position="243"/>
        <end position="247"/>
    </location>
</feature>
<feature type="helix" evidence="12">
    <location>
        <begin position="261"/>
        <end position="263"/>
    </location>
</feature>
<feature type="turn" evidence="12">
    <location>
        <begin position="265"/>
        <end position="269"/>
    </location>
</feature>
<feature type="helix" evidence="12">
    <location>
        <begin position="272"/>
        <end position="274"/>
    </location>
</feature>
<feature type="helix" evidence="12">
    <location>
        <begin position="278"/>
        <end position="291"/>
    </location>
</feature>
<feature type="helix" evidence="12">
    <location>
        <begin position="304"/>
        <end position="313"/>
    </location>
</feature>
<feature type="helix" evidence="12">
    <location>
        <begin position="315"/>
        <end position="318"/>
    </location>
</feature>
<feature type="helix" evidence="12">
    <location>
        <begin position="323"/>
        <end position="327"/>
    </location>
</feature>
<feature type="strand" evidence="12">
    <location>
        <begin position="330"/>
        <end position="332"/>
    </location>
</feature>
<feature type="helix" evidence="12">
    <location>
        <begin position="333"/>
        <end position="335"/>
    </location>
</feature>
<feature type="helix" evidence="12">
    <location>
        <begin position="341"/>
        <end position="344"/>
    </location>
</feature>
<feature type="helix" evidence="12">
    <location>
        <begin position="349"/>
        <end position="354"/>
    </location>
</feature>
<feature type="helix" evidence="12">
    <location>
        <begin position="378"/>
        <end position="397"/>
    </location>
</feature>
<keyword id="KW-0002">3D-structure</keyword>
<keyword id="KW-0963">Cytoplasm</keyword>
<keyword id="KW-0479">Metal-binding</keyword>
<keyword id="KW-0489">Methyltransferase</keyword>
<keyword id="KW-0539">Nucleus</keyword>
<keyword id="KW-0597">Phosphoprotein</keyword>
<keyword id="KW-1185">Reference proteome</keyword>
<keyword id="KW-0808">Transferase</keyword>
<keyword id="KW-0862">Zinc</keyword>
<evidence type="ECO:0000250" key="1">
    <source>
        <dbReference type="UniProtKB" id="O35490"/>
    </source>
</evidence>
<evidence type="ECO:0000250" key="2">
    <source>
        <dbReference type="UniProtKB" id="Q93088"/>
    </source>
</evidence>
<evidence type="ECO:0000255" key="3">
    <source>
        <dbReference type="PROSITE-ProRule" id="PRU00333"/>
    </source>
</evidence>
<evidence type="ECO:0000269" key="4">
    <source>
    </source>
</evidence>
<evidence type="ECO:0000269" key="5">
    <source>
    </source>
</evidence>
<evidence type="ECO:0000269" key="6">
    <source>
    </source>
</evidence>
<evidence type="ECO:0000303" key="7">
    <source>
    </source>
</evidence>
<evidence type="ECO:0000305" key="8"/>
<evidence type="ECO:0000305" key="9">
    <source>
    </source>
</evidence>
<evidence type="ECO:0000305" key="10">
    <source>
    </source>
</evidence>
<evidence type="ECO:0007744" key="11">
    <source>
    </source>
</evidence>
<evidence type="ECO:0007829" key="12">
    <source>
        <dbReference type="PDB" id="1UMY"/>
    </source>
</evidence>
<protein>
    <recommendedName>
        <fullName evidence="7">Betaine--homocysteine S-methyltransferase 1</fullName>
        <ecNumber evidence="4 6">2.1.1.5</ecNumber>
    </recommendedName>
</protein>
<sequence length="407" mass="44976">MAPIAGKKAKRGILERLNAGEVVIGDGGFVFALEKRGYVKAGPWTPEAAVEHPEAVRQLHREFLRAGSNVMQTFTFYASEDKLENRGNYVAEKISGQKVNEAACDIARQVADEGDALVAGGVSQTPSYLSCKSETEVKKIFHQQLEVFMKKNVDFLIAEYFEHVEEAVWAVEALKTSGKPIAATMCIGPEGDLHGVSPGECAVRLVKAGAAIVGVNCHFDPSTSLQTIKLMKEGLEAARLKAYLMSHALAYHTPDCGKQGFIDLPEFPFGLEPRVATRWDIQKYAREAYNLGVRYIGGCCGFEPYHIRAIAEELAPERGFLPPASEKHGSWGSGLDMHTKPWIRARARKEYWQNLRIASGRPYNPSMSKPDAWGVTKGAAELMQQKEATTEQQLRALFEKQKFKSAQ</sequence>
<dbReference type="EC" id="2.1.1.5" evidence="4 6"/>
<dbReference type="EMBL" id="U96133">
    <property type="protein sequence ID" value="AAB53763.1"/>
    <property type="molecule type" value="mRNA"/>
</dbReference>
<dbReference type="EMBL" id="AF038870">
    <property type="protein sequence ID" value="AAB95481.1"/>
    <property type="molecule type" value="mRNA"/>
</dbReference>
<dbReference type="EMBL" id="BC078811">
    <property type="protein sequence ID" value="AAH78811.1"/>
    <property type="molecule type" value="mRNA"/>
</dbReference>
<dbReference type="RefSeq" id="NP_110477.1">
    <property type="nucleotide sequence ID" value="NM_030850.1"/>
</dbReference>
<dbReference type="PDB" id="1UMY">
    <property type="method" value="X-ray"/>
    <property type="resolution" value="2.50 A"/>
    <property type="chains" value="A/B/C/D=1-407"/>
</dbReference>
<dbReference type="PDBsum" id="1UMY"/>
<dbReference type="SMR" id="O09171"/>
<dbReference type="FunCoup" id="O09171">
    <property type="interactions" value="164"/>
</dbReference>
<dbReference type="IntAct" id="O09171">
    <property type="interactions" value="2"/>
</dbReference>
<dbReference type="STRING" id="10116.ENSRNOP00000015336"/>
<dbReference type="iPTMnet" id="O09171"/>
<dbReference type="PhosphoSitePlus" id="O09171"/>
<dbReference type="PaxDb" id="10116-ENSRNOP00000015336"/>
<dbReference type="GeneID" id="81508"/>
<dbReference type="KEGG" id="rno:81508"/>
<dbReference type="UCSC" id="RGD:621496">
    <property type="organism name" value="rat"/>
</dbReference>
<dbReference type="AGR" id="RGD:621496"/>
<dbReference type="CTD" id="635"/>
<dbReference type="RGD" id="621496">
    <property type="gene designation" value="Bhmt"/>
</dbReference>
<dbReference type="eggNOG" id="KOG1579">
    <property type="taxonomic scope" value="Eukaryota"/>
</dbReference>
<dbReference type="InParanoid" id="O09171"/>
<dbReference type="OrthoDB" id="12981at9989"/>
<dbReference type="PhylomeDB" id="O09171"/>
<dbReference type="TreeFam" id="TF329202"/>
<dbReference type="BioCyc" id="MetaCyc:MONOMER-9241"/>
<dbReference type="BRENDA" id="2.1.1.10">
    <property type="organism ID" value="5301"/>
</dbReference>
<dbReference type="BRENDA" id="2.1.1.5">
    <property type="organism ID" value="5301"/>
</dbReference>
<dbReference type="Reactome" id="R-RNO-1614635">
    <property type="pathway name" value="Sulfur amino acid metabolism"/>
</dbReference>
<dbReference type="Reactome" id="R-RNO-6798163">
    <property type="pathway name" value="Choline catabolism"/>
</dbReference>
<dbReference type="UniPathway" id="UPA00051">
    <property type="reaction ID" value="UER00083"/>
</dbReference>
<dbReference type="UniPathway" id="UPA00291">
    <property type="reaction ID" value="UER00432"/>
</dbReference>
<dbReference type="EvolutionaryTrace" id="O09171"/>
<dbReference type="PRO" id="PR:O09171"/>
<dbReference type="Proteomes" id="UP000002494">
    <property type="component" value="Unplaced"/>
</dbReference>
<dbReference type="GO" id="GO:0005829">
    <property type="term" value="C:cytosol"/>
    <property type="evidence" value="ECO:0000314"/>
    <property type="project" value="UniProtKB"/>
</dbReference>
<dbReference type="GO" id="GO:0070062">
    <property type="term" value="C:extracellular exosome"/>
    <property type="evidence" value="ECO:0000266"/>
    <property type="project" value="RGD"/>
</dbReference>
<dbReference type="GO" id="GO:0005615">
    <property type="term" value="C:extracellular space"/>
    <property type="evidence" value="ECO:0000314"/>
    <property type="project" value="RGD"/>
</dbReference>
<dbReference type="GO" id="GO:0005634">
    <property type="term" value="C:nucleus"/>
    <property type="evidence" value="ECO:0000314"/>
    <property type="project" value="UniProtKB"/>
</dbReference>
<dbReference type="GO" id="GO:0032991">
    <property type="term" value="C:protein-containing complex"/>
    <property type="evidence" value="ECO:0000314"/>
    <property type="project" value="RGD"/>
</dbReference>
<dbReference type="GO" id="GO:0047150">
    <property type="term" value="F:betaine-homocysteine S-methyltransferase activity"/>
    <property type="evidence" value="ECO:0000314"/>
    <property type="project" value="UniProtKB"/>
</dbReference>
<dbReference type="GO" id="GO:0042802">
    <property type="term" value="F:identical protein binding"/>
    <property type="evidence" value="ECO:0000314"/>
    <property type="project" value="UniProtKB"/>
</dbReference>
<dbReference type="GO" id="GO:0008168">
    <property type="term" value="F:methyltransferase activity"/>
    <property type="evidence" value="ECO:0000314"/>
    <property type="project" value="RGD"/>
</dbReference>
<dbReference type="GO" id="GO:0044877">
    <property type="term" value="F:protein-containing complex binding"/>
    <property type="evidence" value="ECO:0000314"/>
    <property type="project" value="RGD"/>
</dbReference>
<dbReference type="GO" id="GO:0008270">
    <property type="term" value="F:zinc ion binding"/>
    <property type="evidence" value="ECO:0000266"/>
    <property type="project" value="RGD"/>
</dbReference>
<dbReference type="GO" id="GO:0006579">
    <property type="term" value="P:amino-acid betaine catabolic process"/>
    <property type="evidence" value="ECO:0007669"/>
    <property type="project" value="UniProtKB-UniPathway"/>
</dbReference>
<dbReference type="GO" id="GO:0006577">
    <property type="term" value="P:amino-acid betaine metabolic process"/>
    <property type="evidence" value="ECO:0000266"/>
    <property type="project" value="RGD"/>
</dbReference>
<dbReference type="GO" id="GO:0071267">
    <property type="term" value="P:L-methionine salvage"/>
    <property type="evidence" value="ECO:0000318"/>
    <property type="project" value="GO_Central"/>
</dbReference>
<dbReference type="GO" id="GO:0032259">
    <property type="term" value="P:methylation"/>
    <property type="evidence" value="ECO:0007669"/>
    <property type="project" value="UniProtKB-KW"/>
</dbReference>
<dbReference type="GO" id="GO:0097305">
    <property type="term" value="P:response to alcohol"/>
    <property type="evidence" value="ECO:0000270"/>
    <property type="project" value="RGD"/>
</dbReference>
<dbReference type="FunFam" id="3.20.20.330:FF:000003">
    <property type="entry name" value="Betaine--homocysteine S-methyltransferase 1"/>
    <property type="match status" value="1"/>
</dbReference>
<dbReference type="Gene3D" id="3.20.20.330">
    <property type="entry name" value="Homocysteine-binding-like domain"/>
    <property type="match status" value="1"/>
</dbReference>
<dbReference type="InterPro" id="IPR017226">
    <property type="entry name" value="Betaine-hCys_S-MeTrfase_BHMT"/>
</dbReference>
<dbReference type="InterPro" id="IPR051524">
    <property type="entry name" value="BHMT"/>
</dbReference>
<dbReference type="InterPro" id="IPR003726">
    <property type="entry name" value="HCY_dom"/>
</dbReference>
<dbReference type="InterPro" id="IPR036589">
    <property type="entry name" value="HCY_dom_sf"/>
</dbReference>
<dbReference type="PANTHER" id="PTHR46120">
    <property type="entry name" value="BETAINE--HOMOCYSTEINE S-METHYLTRANSFERASE 1"/>
    <property type="match status" value="1"/>
</dbReference>
<dbReference type="PANTHER" id="PTHR46120:SF2">
    <property type="entry name" value="BETAINE--HOMOCYSTEINE S-METHYLTRANSFERASE 1"/>
    <property type="match status" value="1"/>
</dbReference>
<dbReference type="Pfam" id="PF02574">
    <property type="entry name" value="S-methyl_trans"/>
    <property type="match status" value="1"/>
</dbReference>
<dbReference type="PIRSF" id="PIRSF037505">
    <property type="entry name" value="Betaine_HMT"/>
    <property type="match status" value="1"/>
</dbReference>
<dbReference type="SUPFAM" id="SSF82282">
    <property type="entry name" value="Homocysteine S-methyltransferase"/>
    <property type="match status" value="1"/>
</dbReference>
<dbReference type="PROSITE" id="PS50970">
    <property type="entry name" value="HCY"/>
    <property type="match status" value="1"/>
</dbReference>
<accession>O09171</accession>
<accession>Q6AZ06</accession>
<comment type="function">
    <text evidence="4 6">Involved in the regulation of homocysteine metabolism. Converts betaine and homocysteine to dimethylglycine and methionine, respectively. This reaction is also required for the irreversible oxidation of choline.</text>
</comment>
<comment type="catalytic activity">
    <reaction evidence="4 6">
        <text>L-homocysteine + glycine betaine = N,N-dimethylglycine + L-methionine</text>
        <dbReference type="Rhea" id="RHEA:22336"/>
        <dbReference type="ChEBI" id="CHEBI:17750"/>
        <dbReference type="ChEBI" id="CHEBI:57844"/>
        <dbReference type="ChEBI" id="CHEBI:58199"/>
        <dbReference type="ChEBI" id="CHEBI:58251"/>
        <dbReference type="EC" id="2.1.1.5"/>
    </reaction>
    <physiologicalReaction direction="left-to-right" evidence="9 10">
        <dbReference type="Rhea" id="RHEA:22337"/>
    </physiologicalReaction>
</comment>
<comment type="cofactor">
    <cofactor>
        <name>Zn(2+)</name>
        <dbReference type="ChEBI" id="CHEBI:29105"/>
    </cofactor>
    <text>Binds 1 zinc ion per subunit.</text>
</comment>
<comment type="biophysicochemical properties">
    <kinetics>
        <KM evidence="4">106.4 uM for L-homocysteine</KM>
        <KM evidence="4">333.3 uM for glycine betaine</KM>
        <Vmax evidence="4">18.67 nmol/min/mg enzyme (L-methionine biosynthesis)</Vmax>
    </kinetics>
</comment>
<comment type="pathway">
    <text>Amine and polyamine degradation; betaine degradation; sarcosine from betaine: step 1/2.</text>
</comment>
<comment type="pathway">
    <text evidence="9">Amino-acid biosynthesis; L-methionine biosynthesis via de novo pathway; L-methionine from L-homocysteine (BhmT route): step 1/1.</text>
</comment>
<comment type="subunit">
    <text evidence="5 6">Homotetramer.</text>
</comment>
<comment type="subcellular location">
    <subcellularLocation>
        <location evidence="4 6">Cytoplasm</location>
        <location evidence="4 6">Cytosol</location>
    </subcellularLocation>
    <subcellularLocation>
        <location evidence="6">Nucleus</location>
    </subcellularLocation>
    <text evidence="6">Predominantly localized in the cytoplasm with a small fraction detected in the nucleus. Translocates into the nucleus upon oxidative stress.</text>
</comment>
<comment type="tissue specificity">
    <text evidence="6">Highly expressed in liver and kidney (at protein level). Expressed at lower levels in testis, lung, cerebellum, skeletal muscle and pancreas (at protein level).</text>
</comment>
<name>BHMT1_RAT</name>